<comment type="function">
    <text evidence="1">Catalyzes the ATP-dependent 2-thiolation of cytidine in position 32 of tRNA, to form 2-thiocytidine (s(2)C32). The sulfur atoms are provided by the cysteine/cysteine desulfurase (IscS) system.</text>
</comment>
<comment type="catalytic activity">
    <reaction evidence="1">
        <text>cytidine(32) in tRNA + S-sulfanyl-L-cysteinyl-[cysteine desulfurase] + AH2 + ATP = 2-thiocytidine(32) in tRNA + L-cysteinyl-[cysteine desulfurase] + A + AMP + diphosphate + H(+)</text>
        <dbReference type="Rhea" id="RHEA:57048"/>
        <dbReference type="Rhea" id="RHEA-COMP:10288"/>
        <dbReference type="Rhea" id="RHEA-COMP:12157"/>
        <dbReference type="Rhea" id="RHEA-COMP:12158"/>
        <dbReference type="Rhea" id="RHEA-COMP:14821"/>
        <dbReference type="ChEBI" id="CHEBI:13193"/>
        <dbReference type="ChEBI" id="CHEBI:15378"/>
        <dbReference type="ChEBI" id="CHEBI:17499"/>
        <dbReference type="ChEBI" id="CHEBI:29950"/>
        <dbReference type="ChEBI" id="CHEBI:30616"/>
        <dbReference type="ChEBI" id="CHEBI:33019"/>
        <dbReference type="ChEBI" id="CHEBI:61963"/>
        <dbReference type="ChEBI" id="CHEBI:82748"/>
        <dbReference type="ChEBI" id="CHEBI:141453"/>
        <dbReference type="ChEBI" id="CHEBI:456215"/>
    </reaction>
    <physiologicalReaction direction="left-to-right" evidence="1">
        <dbReference type="Rhea" id="RHEA:57049"/>
    </physiologicalReaction>
</comment>
<comment type="cofactor">
    <cofactor evidence="1">
        <name>Mg(2+)</name>
        <dbReference type="ChEBI" id="CHEBI:18420"/>
    </cofactor>
</comment>
<comment type="cofactor">
    <cofactor evidence="1">
        <name>[4Fe-4S] cluster</name>
        <dbReference type="ChEBI" id="CHEBI:49883"/>
    </cofactor>
    <text evidence="1">Binds 1 [4Fe-4S] cluster per subunit. The cluster is chelated by three Cys residues, the fourth Fe has a free coordination site that may bind a sulfur atom transferred from the persulfide of IscS.</text>
</comment>
<comment type="pathway">
    <text evidence="1">tRNA modification.</text>
</comment>
<comment type="subunit">
    <text evidence="1">Homodimer.</text>
</comment>
<comment type="subcellular location">
    <subcellularLocation>
        <location evidence="1">Cytoplasm</location>
    </subcellularLocation>
</comment>
<comment type="miscellaneous">
    <text evidence="1">The thiolation reaction likely consists of two steps: a first activation step by ATP to form an adenylated intermediate of the target base of tRNA, and a second nucleophilic substitution step of the sulfur (S) atom supplied by the hydrosulfide attached to the Fe-S cluster.</text>
</comment>
<comment type="similarity">
    <text evidence="1">Belongs to the TtcA family.</text>
</comment>
<organism>
    <name type="scientific">Burkholderia lata (strain ATCC 17760 / DSM 23089 / LMG 22485 / NCIMB 9086 / R18194 / 383)</name>
    <dbReference type="NCBI Taxonomy" id="482957"/>
    <lineage>
        <taxon>Bacteria</taxon>
        <taxon>Pseudomonadati</taxon>
        <taxon>Pseudomonadota</taxon>
        <taxon>Betaproteobacteria</taxon>
        <taxon>Burkholderiales</taxon>
        <taxon>Burkholderiaceae</taxon>
        <taxon>Burkholderia</taxon>
        <taxon>Burkholderia cepacia complex</taxon>
    </lineage>
</organism>
<sequence>MNAPHMNDTTADAATLDATAAPAGRPALTRREQKDAYENNKLFKRIVRQVGQAIGDFNMIEQGDKVMVCLSGGKDSYAMLDVLLRLRERAPIDFDIVAVNLDQKQPGFPEHVLPEYLKQVGVPFHIENQDTYSIVKRLVPEGKTTCSLCSRLRRGILYRVAGELGATKIALGHHRDDIVQTLLLNMFYGGKLKGMPPKLQSDDGKNIVIRPLAYVKETDLEKYAELREFPIIPCNLCGSQPNLKRAEMKALIREWDKRFPGRVENMFNALAKVVPSHLMDTTLYPFQSLRASGVADPQGDIAFDEEPCASGDDTAAPGGAQPISIVQFDDL</sequence>
<reference key="1">
    <citation type="submission" date="2005-10" db="EMBL/GenBank/DDBJ databases">
        <title>Complete sequence of chromosome 1 of Burkholderia sp. 383.</title>
        <authorList>
            <consortium name="US DOE Joint Genome Institute"/>
            <person name="Copeland A."/>
            <person name="Lucas S."/>
            <person name="Lapidus A."/>
            <person name="Barry K."/>
            <person name="Detter J.C."/>
            <person name="Glavina T."/>
            <person name="Hammon N."/>
            <person name="Israni S."/>
            <person name="Pitluck S."/>
            <person name="Chain P."/>
            <person name="Malfatti S."/>
            <person name="Shin M."/>
            <person name="Vergez L."/>
            <person name="Schmutz J."/>
            <person name="Larimer F."/>
            <person name="Land M."/>
            <person name="Kyrpides N."/>
            <person name="Lykidis A."/>
            <person name="Richardson P."/>
        </authorList>
    </citation>
    <scope>NUCLEOTIDE SEQUENCE [LARGE SCALE GENOMIC DNA]</scope>
    <source>
        <strain>ATCC 17760 / DSM 23089 / LMG 22485 / NCIMB 9086 / R18194 / 383</strain>
    </source>
</reference>
<feature type="chain" id="PRO_0000348695" description="tRNA-cytidine(32) 2-sulfurtransferase">
    <location>
        <begin position="1"/>
        <end position="331"/>
    </location>
</feature>
<feature type="region of interest" description="Disordered" evidence="2">
    <location>
        <begin position="1"/>
        <end position="31"/>
    </location>
</feature>
<feature type="short sequence motif" description="PP-loop motif" evidence="1">
    <location>
        <begin position="71"/>
        <end position="76"/>
    </location>
</feature>
<feature type="compositionally biased region" description="Low complexity" evidence="2">
    <location>
        <begin position="8"/>
        <end position="23"/>
    </location>
</feature>
<feature type="binding site" evidence="1">
    <location>
        <position position="146"/>
    </location>
    <ligand>
        <name>[4Fe-4S] cluster</name>
        <dbReference type="ChEBI" id="CHEBI:49883"/>
    </ligand>
</feature>
<feature type="binding site" evidence="1">
    <location>
        <position position="149"/>
    </location>
    <ligand>
        <name>[4Fe-4S] cluster</name>
        <dbReference type="ChEBI" id="CHEBI:49883"/>
    </ligand>
</feature>
<feature type="binding site" evidence="1">
    <location>
        <position position="237"/>
    </location>
    <ligand>
        <name>[4Fe-4S] cluster</name>
        <dbReference type="ChEBI" id="CHEBI:49883"/>
    </ligand>
</feature>
<protein>
    <recommendedName>
        <fullName evidence="1">tRNA-cytidine(32) 2-sulfurtransferase</fullName>
        <ecNumber evidence="1">2.8.1.-</ecNumber>
    </recommendedName>
    <alternativeName>
        <fullName evidence="1">Two-thiocytidine biosynthesis protein A</fullName>
    </alternativeName>
    <alternativeName>
        <fullName evidence="1">tRNA 2-thiocytidine biosynthesis protein TtcA</fullName>
    </alternativeName>
</protein>
<gene>
    <name evidence="1" type="primary">ttcA</name>
    <name type="ordered locus">Bcep18194_A6329</name>
</gene>
<evidence type="ECO:0000255" key="1">
    <source>
        <dbReference type="HAMAP-Rule" id="MF_01850"/>
    </source>
</evidence>
<evidence type="ECO:0000256" key="2">
    <source>
        <dbReference type="SAM" id="MobiDB-lite"/>
    </source>
</evidence>
<dbReference type="EC" id="2.8.1.-" evidence="1"/>
<dbReference type="EMBL" id="CP000151">
    <property type="protein sequence ID" value="ABB09923.1"/>
    <property type="molecule type" value="Genomic_DNA"/>
</dbReference>
<dbReference type="RefSeq" id="WP_011353429.1">
    <property type="nucleotide sequence ID" value="NC_007510.1"/>
</dbReference>
<dbReference type="SMR" id="Q39C93"/>
<dbReference type="GeneID" id="45096201"/>
<dbReference type="KEGG" id="bur:Bcep18194_A6329"/>
<dbReference type="PATRIC" id="fig|482957.22.peg.3349"/>
<dbReference type="HOGENOM" id="CLU_026481_0_0_4"/>
<dbReference type="Proteomes" id="UP000002705">
    <property type="component" value="Chromosome 1"/>
</dbReference>
<dbReference type="GO" id="GO:0005737">
    <property type="term" value="C:cytoplasm"/>
    <property type="evidence" value="ECO:0007669"/>
    <property type="project" value="UniProtKB-SubCell"/>
</dbReference>
<dbReference type="GO" id="GO:0051539">
    <property type="term" value="F:4 iron, 4 sulfur cluster binding"/>
    <property type="evidence" value="ECO:0007669"/>
    <property type="project" value="UniProtKB-UniRule"/>
</dbReference>
<dbReference type="GO" id="GO:0005524">
    <property type="term" value="F:ATP binding"/>
    <property type="evidence" value="ECO:0007669"/>
    <property type="project" value="UniProtKB-UniRule"/>
</dbReference>
<dbReference type="GO" id="GO:0000287">
    <property type="term" value="F:magnesium ion binding"/>
    <property type="evidence" value="ECO:0007669"/>
    <property type="project" value="UniProtKB-UniRule"/>
</dbReference>
<dbReference type="GO" id="GO:0016783">
    <property type="term" value="F:sulfurtransferase activity"/>
    <property type="evidence" value="ECO:0007669"/>
    <property type="project" value="UniProtKB-UniRule"/>
</dbReference>
<dbReference type="GO" id="GO:0000049">
    <property type="term" value="F:tRNA binding"/>
    <property type="evidence" value="ECO:0007669"/>
    <property type="project" value="UniProtKB-KW"/>
</dbReference>
<dbReference type="GO" id="GO:0034227">
    <property type="term" value="P:tRNA thio-modification"/>
    <property type="evidence" value="ECO:0007669"/>
    <property type="project" value="UniProtKB-UniRule"/>
</dbReference>
<dbReference type="CDD" id="cd24138">
    <property type="entry name" value="TtcA-like"/>
    <property type="match status" value="1"/>
</dbReference>
<dbReference type="Gene3D" id="3.40.50.620">
    <property type="entry name" value="HUPs"/>
    <property type="match status" value="1"/>
</dbReference>
<dbReference type="HAMAP" id="MF_01850">
    <property type="entry name" value="TtcA"/>
    <property type="match status" value="1"/>
</dbReference>
<dbReference type="InterPro" id="IPR014729">
    <property type="entry name" value="Rossmann-like_a/b/a_fold"/>
</dbReference>
<dbReference type="InterPro" id="IPR011063">
    <property type="entry name" value="TilS/TtcA_N"/>
</dbReference>
<dbReference type="InterPro" id="IPR012089">
    <property type="entry name" value="tRNA_Cyd_32_2_STrfase"/>
</dbReference>
<dbReference type="NCBIfam" id="NF007972">
    <property type="entry name" value="PRK10696.1"/>
    <property type="match status" value="1"/>
</dbReference>
<dbReference type="PANTHER" id="PTHR43686:SF1">
    <property type="entry name" value="AMINOTRAN_5 DOMAIN-CONTAINING PROTEIN"/>
    <property type="match status" value="1"/>
</dbReference>
<dbReference type="PANTHER" id="PTHR43686">
    <property type="entry name" value="SULFURTRANSFERASE-RELATED"/>
    <property type="match status" value="1"/>
</dbReference>
<dbReference type="Pfam" id="PF01171">
    <property type="entry name" value="ATP_bind_3"/>
    <property type="match status" value="1"/>
</dbReference>
<dbReference type="SUPFAM" id="SSF52402">
    <property type="entry name" value="Adenine nucleotide alpha hydrolases-like"/>
    <property type="match status" value="1"/>
</dbReference>
<accession>Q39C93</accession>
<name>TTCA_BURL3</name>
<proteinExistence type="inferred from homology"/>
<keyword id="KW-0004">4Fe-4S</keyword>
<keyword id="KW-0067">ATP-binding</keyword>
<keyword id="KW-0963">Cytoplasm</keyword>
<keyword id="KW-0408">Iron</keyword>
<keyword id="KW-0411">Iron-sulfur</keyword>
<keyword id="KW-0460">Magnesium</keyword>
<keyword id="KW-0479">Metal-binding</keyword>
<keyword id="KW-0547">Nucleotide-binding</keyword>
<keyword id="KW-0694">RNA-binding</keyword>
<keyword id="KW-0808">Transferase</keyword>
<keyword id="KW-0819">tRNA processing</keyword>
<keyword id="KW-0820">tRNA-binding</keyword>